<gene>
    <name evidence="7" type="primary">AGL63</name>
    <name evidence="8" type="synonym">GOA</name>
    <name evidence="10" type="ordered locus">At1g31140</name>
    <name evidence="11" type="ORF">F28K20.7</name>
</gene>
<protein>
    <recommendedName>
        <fullName evidence="9">Agamous-like MADS-box protein AGL63</fullName>
    </recommendedName>
    <alternativeName>
        <fullName evidence="8">Protein GORDITA</fullName>
    </alternativeName>
</protein>
<feature type="chain" id="PRO_0000439290" description="Agamous-like MADS-box protein AGL63">
    <location>
        <begin position="1"/>
        <end position="215"/>
    </location>
</feature>
<feature type="domain" description="MADS-box" evidence="1">
    <location>
        <begin position="1"/>
        <end position="61"/>
    </location>
</feature>
<feature type="domain" description="K-box" evidence="2">
    <location>
        <begin position="90"/>
        <end position="178"/>
    </location>
</feature>
<feature type="region of interest" description="Disordered" evidence="3">
    <location>
        <begin position="143"/>
        <end position="172"/>
    </location>
</feature>
<feature type="region of interest" description="Disordered" evidence="3">
    <location>
        <begin position="184"/>
        <end position="215"/>
    </location>
</feature>
<feature type="splice variant" id="VSP_058826" description="In isoform 2.">
    <location>
        <begin position="88"/>
        <end position="89"/>
    </location>
</feature>
<reference key="1">
    <citation type="journal article" date="2003" name="Plant Cell">
        <title>Molecular and phylogenetic analyses of the complete MADS-box transcription factor family in Arabidopsis: new openings to the MADS world.</title>
        <authorList>
            <person name="Parenicova L."/>
            <person name="de Folter S."/>
            <person name="Kieffer M."/>
            <person name="Horner D.S."/>
            <person name="Favalli C."/>
            <person name="Busscher J."/>
            <person name="Cook H.E."/>
            <person name="Ingram R.M."/>
            <person name="Kater M.M."/>
            <person name="Davies B."/>
            <person name="Angenent G.C."/>
            <person name="Colombo L."/>
        </authorList>
    </citation>
    <scope>NUCLEOTIDE SEQUENCE [MRNA] (ISOFORM 2)</scope>
    <scope>GENE FAMILY</scope>
    <scope>NOMENCLATURE</scope>
    <source>
        <strain>cv. Columbia</strain>
        <tissue>Flower</tissue>
    </source>
</reference>
<reference key="2">
    <citation type="journal article" date="2010" name="Plant J.">
        <title>GORDITA (AGL63) is a young paralog of the Arabidopsis thaliana B(sister) MADS box gene ABS (TT16) that has undergone neofunctionalization.</title>
        <authorList>
            <person name="Erdmann R."/>
            <person name="Gramzow L."/>
            <person name="Melzer R."/>
            <person name="Theissen G."/>
            <person name="Becker A."/>
        </authorList>
    </citation>
    <scope>NUCLEOTIDE SEQUENCE [MRNA] (ISOFORM 1)</scope>
    <scope>FUNCTION</scope>
    <scope>INTERACTION WITH AGL16</scope>
    <scope>TISSUE SPECIFICITY</scope>
    <source>
        <strain>cv. Columbia</strain>
        <tissue>Flower</tissue>
        <tissue>Flower bud</tissue>
    </source>
</reference>
<reference key="3">
    <citation type="journal article" date="2000" name="Nature">
        <title>Sequence and analysis of chromosome 1 of the plant Arabidopsis thaliana.</title>
        <authorList>
            <person name="Theologis A."/>
            <person name="Ecker J.R."/>
            <person name="Palm C.J."/>
            <person name="Federspiel N.A."/>
            <person name="Kaul S."/>
            <person name="White O."/>
            <person name="Alonso J."/>
            <person name="Altafi H."/>
            <person name="Araujo R."/>
            <person name="Bowman C.L."/>
            <person name="Brooks S.Y."/>
            <person name="Buehler E."/>
            <person name="Chan A."/>
            <person name="Chao Q."/>
            <person name="Chen H."/>
            <person name="Cheuk R.F."/>
            <person name="Chin C.W."/>
            <person name="Chung M.K."/>
            <person name="Conn L."/>
            <person name="Conway A.B."/>
            <person name="Conway A.R."/>
            <person name="Creasy T.H."/>
            <person name="Dewar K."/>
            <person name="Dunn P."/>
            <person name="Etgu P."/>
            <person name="Feldblyum T.V."/>
            <person name="Feng J.-D."/>
            <person name="Fong B."/>
            <person name="Fujii C.Y."/>
            <person name="Gill J.E."/>
            <person name="Goldsmith A.D."/>
            <person name="Haas B."/>
            <person name="Hansen N.F."/>
            <person name="Hughes B."/>
            <person name="Huizar L."/>
            <person name="Hunter J.L."/>
            <person name="Jenkins J."/>
            <person name="Johnson-Hopson C."/>
            <person name="Khan S."/>
            <person name="Khaykin E."/>
            <person name="Kim C.J."/>
            <person name="Koo H.L."/>
            <person name="Kremenetskaia I."/>
            <person name="Kurtz D.B."/>
            <person name="Kwan A."/>
            <person name="Lam B."/>
            <person name="Langin-Hooper S."/>
            <person name="Lee A."/>
            <person name="Lee J.M."/>
            <person name="Lenz C.A."/>
            <person name="Li J.H."/>
            <person name="Li Y.-P."/>
            <person name="Lin X."/>
            <person name="Liu S.X."/>
            <person name="Liu Z.A."/>
            <person name="Luros J.S."/>
            <person name="Maiti R."/>
            <person name="Marziali A."/>
            <person name="Militscher J."/>
            <person name="Miranda M."/>
            <person name="Nguyen M."/>
            <person name="Nierman W.C."/>
            <person name="Osborne B.I."/>
            <person name="Pai G."/>
            <person name="Peterson J."/>
            <person name="Pham P.K."/>
            <person name="Rizzo M."/>
            <person name="Rooney T."/>
            <person name="Rowley D."/>
            <person name="Sakano H."/>
            <person name="Salzberg S.L."/>
            <person name="Schwartz J.R."/>
            <person name="Shinn P."/>
            <person name="Southwick A.M."/>
            <person name="Sun H."/>
            <person name="Tallon L.J."/>
            <person name="Tambunga G."/>
            <person name="Toriumi M.J."/>
            <person name="Town C.D."/>
            <person name="Utterback T."/>
            <person name="Van Aken S."/>
            <person name="Vaysberg M."/>
            <person name="Vysotskaia V.S."/>
            <person name="Walker M."/>
            <person name="Wu D."/>
            <person name="Yu G."/>
            <person name="Fraser C.M."/>
            <person name="Venter J.C."/>
            <person name="Davis R.W."/>
        </authorList>
    </citation>
    <scope>NUCLEOTIDE SEQUENCE [LARGE SCALE GENOMIC DNA]</scope>
    <source>
        <strain>cv. Columbia</strain>
    </source>
</reference>
<reference key="4">
    <citation type="journal article" date="2017" name="Plant J.">
        <title>Araport11: a complete reannotation of the Arabidopsis thaliana reference genome.</title>
        <authorList>
            <person name="Cheng C.Y."/>
            <person name="Krishnakumar V."/>
            <person name="Chan A.P."/>
            <person name="Thibaud-Nissen F."/>
            <person name="Schobel S."/>
            <person name="Town C.D."/>
        </authorList>
    </citation>
    <scope>GENOME REANNOTATION</scope>
    <source>
        <strain>cv. Columbia</strain>
    </source>
</reference>
<reference key="5">
    <citation type="submission" date="2009-03" db="EMBL/GenBank/DDBJ databases">
        <title>ORF cloning and analysis of Arabidopsis transcription factor genes.</title>
        <authorList>
            <person name="Fujita M."/>
            <person name="Mizukado S."/>
            <person name="Seki M."/>
            <person name="Shinozaki K."/>
            <person name="Mitsuda N."/>
            <person name="Takiguchi Y."/>
            <person name="Takagi M."/>
        </authorList>
    </citation>
    <scope>NUCLEOTIDE SEQUENCE [LARGE SCALE MRNA] (ISOFORM 1)</scope>
</reference>
<reference key="6">
    <citation type="journal article" date="2010" name="Plant J.">
        <title>The Arabidopsis B-sister MADS-box protein, GORDITA, represses fruit growth and contributes to integument development.</title>
        <authorList>
            <person name="Prasad K."/>
            <person name="Zhang X."/>
            <person name="Tobon E."/>
            <person name="Ambrose B.A."/>
        </authorList>
    </citation>
    <scope>FUNCTION</scope>
    <scope>TISSUE SPECIFICITY</scope>
</reference>
<reference key="7">
    <citation type="journal article" date="2016" name="Plant Cell">
        <title>Endosperm and nucellus develop antagonistically in Arabidopsis seeds.</title>
        <authorList>
            <person name="Xu W."/>
            <person name="Fiume E."/>
            <person name="Coen O."/>
            <person name="Pechoux C."/>
            <person name="Lepiniec L."/>
            <person name="Magnani E."/>
        </authorList>
    </citation>
    <scope>FUNCTION</scope>
</reference>
<proteinExistence type="evidence at protein level"/>
<organism>
    <name type="scientific">Arabidopsis thaliana</name>
    <name type="common">Mouse-ear cress</name>
    <dbReference type="NCBI Taxonomy" id="3702"/>
    <lineage>
        <taxon>Eukaryota</taxon>
        <taxon>Viridiplantae</taxon>
        <taxon>Streptophyta</taxon>
        <taxon>Embryophyta</taxon>
        <taxon>Tracheophyta</taxon>
        <taxon>Spermatophyta</taxon>
        <taxon>Magnoliopsida</taxon>
        <taxon>eudicotyledons</taxon>
        <taxon>Gunneridae</taxon>
        <taxon>Pentapetalae</taxon>
        <taxon>rosids</taxon>
        <taxon>malvids</taxon>
        <taxon>Brassicales</taxon>
        <taxon>Brassicaceae</taxon>
        <taxon>Camelineae</taxon>
        <taxon>Arabidopsis</taxon>
    </lineage>
</organism>
<name>AGL63_ARATH</name>
<keyword id="KW-0025">Alternative splicing</keyword>
<keyword id="KW-0217">Developmental protein</keyword>
<keyword id="KW-0238">DNA-binding</keyword>
<keyword id="KW-0287">Flowering</keyword>
<keyword id="KW-0341">Growth regulation</keyword>
<keyword id="KW-0539">Nucleus</keyword>
<keyword id="KW-1185">Reference proteome</keyword>
<keyword id="KW-0804">Transcription</keyword>
<keyword id="KW-0805">Transcription regulation</keyword>
<comment type="function">
    <text evidence="4 5 6">Probable transcription factor involved in the regulation of fruit growth. Contributes to integument development. Controls organ size via cell expansion (PubMed:20088901). Involved in the regulation of longitudinal growth of the fruit evenly throughout the radial axis (PubMed:20598091). Functions redundantly with TT16/AGL32 to repress nucellus growth and promote its degeneration (PubMed:27233529).</text>
</comment>
<comment type="subunit">
    <text evidence="5">Forms homodimer (PubMed:20598091). Interacts with AGL16 (PubMed:20598091).</text>
</comment>
<comment type="interaction">
    <interactant intactId="EBI-622106">
        <id>Q9SA07</id>
    </interactant>
    <interactant intactId="EBI-15192325">
        <id>Q8LPR5</id>
        <label>TCP4</label>
    </interactant>
    <organismsDiffer>false</organismsDiffer>
    <experiments>4</experiments>
</comment>
<comment type="subcellular location">
    <subcellularLocation>
        <location evidence="1">Nucleus</location>
    </subcellularLocation>
</comment>
<comment type="alternative products">
    <event type="alternative splicing"/>
    <isoform>
        <id>Q9SA07-1</id>
        <name>1</name>
        <sequence type="displayed"/>
    </isoform>
    <isoform>
        <id>Q9SA07-2</id>
        <name>2</name>
        <sequence type="described" ref="VSP_058826"/>
    </isoform>
</comment>
<comment type="tissue specificity">
    <text evidence="4 5">Expressed in bud pedicels, petals, anthers, style, ovary, seeds and embryos.</text>
</comment>
<comment type="miscellaneous">
    <text evidence="4 5">Plants over-expressing AGL63 are dwarf, have few rosette leaves with a curly-leaf phenotype, and display small disorganized floral structures and addition of carpel-like, resulting in small abnormal siliques with few seed production.</text>
</comment>
<sequence>MRKGKRVIKKIEEKIKRQVTFAKRKKSLIKKAYELSVLCDVHLGLIIFSHSNRLYDFCSNSTSMENLIMRYQKEKEGQTTAEHSFHSDQCSDCVKTKESMMREIENLKLNLQLYDGHGLNLLTYDELLSFELHLESSLQHARARKSEFMHQQQQQQTDQKLKGKEKGQGSSWEQLMWQAERQMMTCQRQKDPAPANEGGVPFLRWGTTHRRSSPP</sequence>
<evidence type="ECO:0000255" key="1">
    <source>
        <dbReference type="PROSITE-ProRule" id="PRU00251"/>
    </source>
</evidence>
<evidence type="ECO:0000255" key="2">
    <source>
        <dbReference type="PROSITE-ProRule" id="PRU00629"/>
    </source>
</evidence>
<evidence type="ECO:0000256" key="3">
    <source>
        <dbReference type="SAM" id="MobiDB-lite"/>
    </source>
</evidence>
<evidence type="ECO:0000269" key="4">
    <source>
    </source>
</evidence>
<evidence type="ECO:0000269" key="5">
    <source>
    </source>
</evidence>
<evidence type="ECO:0000269" key="6">
    <source>
    </source>
</evidence>
<evidence type="ECO:0000303" key="7">
    <source>
    </source>
</evidence>
<evidence type="ECO:0000303" key="8">
    <source>
    </source>
</evidence>
<evidence type="ECO:0000305" key="9"/>
<evidence type="ECO:0000312" key="10">
    <source>
        <dbReference type="Araport" id="AT1G31140"/>
    </source>
</evidence>
<evidence type="ECO:0000312" key="11">
    <source>
        <dbReference type="EMBL" id="AAD21695.1"/>
    </source>
</evidence>
<accession>Q9SA07</accession>
<accession>Q7X9H3</accession>
<dbReference type="EMBL" id="AY141243">
    <property type="protein sequence ID" value="AAN52807.1"/>
    <property type="molecule type" value="mRNA"/>
</dbReference>
<dbReference type="EMBL" id="FR671367">
    <property type="protein sequence ID" value="CBW38506.1"/>
    <property type="molecule type" value="mRNA"/>
</dbReference>
<dbReference type="EMBL" id="AC004793">
    <property type="protein sequence ID" value="AAD21695.1"/>
    <property type="molecule type" value="Genomic_DNA"/>
</dbReference>
<dbReference type="EMBL" id="CP002684">
    <property type="protein sequence ID" value="AEE31316.1"/>
    <property type="molecule type" value="Genomic_DNA"/>
</dbReference>
<dbReference type="EMBL" id="CP002684">
    <property type="protein sequence ID" value="AEE31317.1"/>
    <property type="molecule type" value="Genomic_DNA"/>
</dbReference>
<dbReference type="EMBL" id="AB493489">
    <property type="protein sequence ID" value="BAH30327.1"/>
    <property type="molecule type" value="mRNA"/>
</dbReference>
<dbReference type="PIR" id="A86437">
    <property type="entry name" value="A86437"/>
</dbReference>
<dbReference type="RefSeq" id="NP_001185120.1">
    <molecule id="Q9SA07-1"/>
    <property type="nucleotide sequence ID" value="NM_001198191.2"/>
</dbReference>
<dbReference type="RefSeq" id="NP_174399.2">
    <molecule id="Q9SA07-2"/>
    <property type="nucleotide sequence ID" value="NM_102852.3"/>
</dbReference>
<dbReference type="SMR" id="Q9SA07"/>
<dbReference type="FunCoup" id="Q9SA07">
    <property type="interactions" value="107"/>
</dbReference>
<dbReference type="IntAct" id="Q9SA07">
    <property type="interactions" value="25"/>
</dbReference>
<dbReference type="STRING" id="3702.Q9SA07"/>
<dbReference type="PaxDb" id="3702-AT1G31140.2"/>
<dbReference type="EnsemblPlants" id="AT1G31140.1">
    <molecule id="Q9SA07-2"/>
    <property type="protein sequence ID" value="AT1G31140.1"/>
    <property type="gene ID" value="AT1G31140"/>
</dbReference>
<dbReference type="EnsemblPlants" id="AT1G31140.2">
    <molecule id="Q9SA07-1"/>
    <property type="protein sequence ID" value="AT1G31140.2"/>
    <property type="gene ID" value="AT1G31140"/>
</dbReference>
<dbReference type="GeneID" id="839999"/>
<dbReference type="Gramene" id="AT1G31140.1">
    <molecule id="Q9SA07-2"/>
    <property type="protein sequence ID" value="AT1G31140.1"/>
    <property type="gene ID" value="AT1G31140"/>
</dbReference>
<dbReference type="Gramene" id="AT1G31140.2">
    <molecule id="Q9SA07-1"/>
    <property type="protein sequence ID" value="AT1G31140.2"/>
    <property type="gene ID" value="AT1G31140"/>
</dbReference>
<dbReference type="KEGG" id="ath:AT1G31140"/>
<dbReference type="Araport" id="AT1G31140"/>
<dbReference type="TAIR" id="AT1G31140">
    <property type="gene designation" value="GOA"/>
</dbReference>
<dbReference type="eggNOG" id="KOG0014">
    <property type="taxonomic scope" value="Eukaryota"/>
</dbReference>
<dbReference type="InParanoid" id="Q9SA07"/>
<dbReference type="OMA" id="SSWEHLM"/>
<dbReference type="OrthoDB" id="1898716at2759"/>
<dbReference type="PRO" id="PR:Q9SA07"/>
<dbReference type="Proteomes" id="UP000006548">
    <property type="component" value="Chromosome 1"/>
</dbReference>
<dbReference type="ExpressionAtlas" id="Q9SA07">
    <property type="expression patterns" value="baseline"/>
</dbReference>
<dbReference type="GO" id="GO:0005634">
    <property type="term" value="C:nucleus"/>
    <property type="evidence" value="ECO:0007669"/>
    <property type="project" value="UniProtKB-SubCell"/>
</dbReference>
<dbReference type="GO" id="GO:0003700">
    <property type="term" value="F:DNA-binding transcription factor activity"/>
    <property type="evidence" value="ECO:0000250"/>
    <property type="project" value="TAIR"/>
</dbReference>
<dbReference type="GO" id="GO:0046983">
    <property type="term" value="F:protein dimerization activity"/>
    <property type="evidence" value="ECO:0007669"/>
    <property type="project" value="InterPro"/>
</dbReference>
<dbReference type="GO" id="GO:0000977">
    <property type="term" value="F:RNA polymerase II transcription regulatory region sequence-specific DNA binding"/>
    <property type="evidence" value="ECO:0007669"/>
    <property type="project" value="InterPro"/>
</dbReference>
<dbReference type="GO" id="GO:0010154">
    <property type="term" value="P:fruit development"/>
    <property type="evidence" value="ECO:0000315"/>
    <property type="project" value="TAIR"/>
</dbReference>
<dbReference type="GO" id="GO:0048530">
    <property type="term" value="P:fruit morphogenesis"/>
    <property type="evidence" value="ECO:0000315"/>
    <property type="project" value="TAIR"/>
</dbReference>
<dbReference type="GO" id="GO:0080060">
    <property type="term" value="P:integument development"/>
    <property type="evidence" value="ECO:0000315"/>
    <property type="project" value="TAIR"/>
</dbReference>
<dbReference type="GO" id="GO:0030308">
    <property type="term" value="P:negative regulation of cell growth"/>
    <property type="evidence" value="ECO:0000315"/>
    <property type="project" value="CACAO"/>
</dbReference>
<dbReference type="GO" id="GO:0045944">
    <property type="term" value="P:positive regulation of transcription by RNA polymerase II"/>
    <property type="evidence" value="ECO:0007669"/>
    <property type="project" value="InterPro"/>
</dbReference>
<dbReference type="GO" id="GO:0048510">
    <property type="term" value="P:regulation of timing of transition from vegetative to reproductive phase"/>
    <property type="evidence" value="ECO:0000315"/>
    <property type="project" value="TAIR"/>
</dbReference>
<dbReference type="CDD" id="cd00265">
    <property type="entry name" value="MADS_MEF2_like"/>
    <property type="match status" value="1"/>
</dbReference>
<dbReference type="FunFam" id="3.40.1810.10:FF:000052">
    <property type="entry name" value="MADS-box transcription factor pvg4"/>
    <property type="match status" value="1"/>
</dbReference>
<dbReference type="Gene3D" id="3.40.1810.10">
    <property type="entry name" value="Transcription factor, MADS-box"/>
    <property type="match status" value="1"/>
</dbReference>
<dbReference type="InterPro" id="IPR050142">
    <property type="entry name" value="MADS-box/MEF2_TF"/>
</dbReference>
<dbReference type="InterPro" id="IPR033896">
    <property type="entry name" value="MEF2-like_N"/>
</dbReference>
<dbReference type="InterPro" id="IPR002487">
    <property type="entry name" value="TF_Kbox"/>
</dbReference>
<dbReference type="InterPro" id="IPR002100">
    <property type="entry name" value="TF_MADSbox"/>
</dbReference>
<dbReference type="InterPro" id="IPR036879">
    <property type="entry name" value="TF_MADSbox_sf"/>
</dbReference>
<dbReference type="PANTHER" id="PTHR48019">
    <property type="entry name" value="SERUM RESPONSE FACTOR HOMOLOG"/>
    <property type="match status" value="1"/>
</dbReference>
<dbReference type="Pfam" id="PF01486">
    <property type="entry name" value="K-box"/>
    <property type="match status" value="1"/>
</dbReference>
<dbReference type="Pfam" id="PF00319">
    <property type="entry name" value="SRF-TF"/>
    <property type="match status" value="1"/>
</dbReference>
<dbReference type="PRINTS" id="PR00404">
    <property type="entry name" value="MADSDOMAIN"/>
</dbReference>
<dbReference type="SMART" id="SM00432">
    <property type="entry name" value="MADS"/>
    <property type="match status" value="1"/>
</dbReference>
<dbReference type="SUPFAM" id="SSF55455">
    <property type="entry name" value="SRF-like"/>
    <property type="match status" value="1"/>
</dbReference>
<dbReference type="PROSITE" id="PS51297">
    <property type="entry name" value="K_BOX"/>
    <property type="match status" value="1"/>
</dbReference>
<dbReference type="PROSITE" id="PS50066">
    <property type="entry name" value="MADS_BOX_2"/>
    <property type="match status" value="1"/>
</dbReference>